<comment type="function">
    <text evidence="1">One of the components of the core complex of photosystem II (PSII). It binds chlorophyll and helps catalyze the primary light-induced photochemical processes of PSII. PSII is a light-driven water:plastoquinone oxidoreductase, using light energy to abstract electrons from H(2)O, generating O(2) and a proton gradient subsequently used for ATP formation.</text>
</comment>
<comment type="cofactor">
    <text evidence="1">Binds multiple chlorophylls. PSII binds additional chlorophylls, carotenoids and specific lipids.</text>
</comment>
<comment type="subunit">
    <text evidence="1">PSII is composed of 1 copy each of membrane proteins PsbA, PsbB, PsbC, PsbD, PsbE, PsbF, PsbH, PsbI, PsbJ, PsbK, PsbL, PsbM, PsbT, PsbX, PsbY, PsbZ, Psb30/Ycf12, at least 3 peripheral proteins of the oxygen-evolving complex and a large number of cofactors. It forms dimeric complexes.</text>
</comment>
<comment type="subcellular location">
    <subcellularLocation>
        <location evidence="1">Plastid</location>
        <location evidence="1">Chloroplast thylakoid membrane</location>
        <topology evidence="1">Multi-pass membrane protein</topology>
    </subcellularLocation>
</comment>
<comment type="similarity">
    <text evidence="1">Belongs to the PsbB/PsbC family. PsbB subfamily.</text>
</comment>
<gene>
    <name evidence="1" type="primary">psbB</name>
    <name type="ORF">JNC0808</name>
</gene>
<organism>
    <name type="scientific">Jasminum nudiflorum</name>
    <name type="common">Winter jasmine</name>
    <dbReference type="NCBI Taxonomy" id="126431"/>
    <lineage>
        <taxon>Eukaryota</taxon>
        <taxon>Viridiplantae</taxon>
        <taxon>Streptophyta</taxon>
        <taxon>Embryophyta</taxon>
        <taxon>Tracheophyta</taxon>
        <taxon>Spermatophyta</taxon>
        <taxon>Magnoliopsida</taxon>
        <taxon>eudicotyledons</taxon>
        <taxon>Gunneridae</taxon>
        <taxon>Pentapetalae</taxon>
        <taxon>asterids</taxon>
        <taxon>lamiids</taxon>
        <taxon>Lamiales</taxon>
        <taxon>Oleaceae</taxon>
        <taxon>Jasmineae</taxon>
        <taxon>Jasminum</taxon>
    </lineage>
</organism>
<protein>
    <recommendedName>
        <fullName evidence="1">Photosystem II CP47 reaction center protein</fullName>
    </recommendedName>
    <alternativeName>
        <fullName evidence="1">PSII 47 kDa protein</fullName>
    </alternativeName>
    <alternativeName>
        <fullName evidence="1">Protein CP-47</fullName>
    </alternativeName>
</protein>
<name>PSBB_JASNU</name>
<proteinExistence type="inferred from homology"/>
<accession>Q06RA6</accession>
<reference key="1">
    <citation type="journal article" date="2007" name="Mol. Biol. Evol.">
        <title>Gene relocations within chloroplast genomes of Jasminum and Menodora (Oleaceae) are due to multiple, overlapping inversions.</title>
        <authorList>
            <person name="Lee H.-L."/>
            <person name="Jansen R.K."/>
            <person name="Chumley T.W."/>
            <person name="Kim K.-J."/>
        </authorList>
    </citation>
    <scope>NUCLEOTIDE SEQUENCE [LARGE SCALE GENOMIC DNA]</scope>
</reference>
<dbReference type="EMBL" id="DQ673255">
    <property type="protein sequence ID" value="ABG74652.1"/>
    <property type="molecule type" value="Genomic_DNA"/>
</dbReference>
<dbReference type="RefSeq" id="YP_778515.1">
    <property type="nucleotide sequence ID" value="NC_008407.1"/>
</dbReference>
<dbReference type="SMR" id="Q06RA6"/>
<dbReference type="GeneID" id="4319734"/>
<dbReference type="GO" id="GO:0009535">
    <property type="term" value="C:chloroplast thylakoid membrane"/>
    <property type="evidence" value="ECO:0007669"/>
    <property type="project" value="UniProtKB-SubCell"/>
</dbReference>
<dbReference type="GO" id="GO:0009523">
    <property type="term" value="C:photosystem II"/>
    <property type="evidence" value="ECO:0007669"/>
    <property type="project" value="UniProtKB-KW"/>
</dbReference>
<dbReference type="GO" id="GO:0016168">
    <property type="term" value="F:chlorophyll binding"/>
    <property type="evidence" value="ECO:0007669"/>
    <property type="project" value="UniProtKB-UniRule"/>
</dbReference>
<dbReference type="GO" id="GO:0045156">
    <property type="term" value="F:electron transporter, transferring electrons within the cyclic electron transport pathway of photosynthesis activity"/>
    <property type="evidence" value="ECO:0007669"/>
    <property type="project" value="InterPro"/>
</dbReference>
<dbReference type="GO" id="GO:0009772">
    <property type="term" value="P:photosynthetic electron transport in photosystem II"/>
    <property type="evidence" value="ECO:0007669"/>
    <property type="project" value="InterPro"/>
</dbReference>
<dbReference type="FunFam" id="3.10.680.10:FF:000001">
    <property type="entry name" value="Photosystem II CP47 reaction center protein"/>
    <property type="match status" value="1"/>
</dbReference>
<dbReference type="Gene3D" id="3.10.680.10">
    <property type="entry name" value="Photosystem II CP47 reaction center protein"/>
    <property type="match status" value="1"/>
</dbReference>
<dbReference type="HAMAP" id="MF_01495">
    <property type="entry name" value="PSII_PsbB_CP47"/>
    <property type="match status" value="1"/>
</dbReference>
<dbReference type="InterPro" id="IPR000932">
    <property type="entry name" value="PS_antenna-like"/>
</dbReference>
<dbReference type="InterPro" id="IPR036001">
    <property type="entry name" value="PS_II_antenna-like_sf"/>
</dbReference>
<dbReference type="InterPro" id="IPR017486">
    <property type="entry name" value="PSII_PsbB"/>
</dbReference>
<dbReference type="NCBIfam" id="TIGR03039">
    <property type="entry name" value="PS_II_CP47"/>
    <property type="match status" value="1"/>
</dbReference>
<dbReference type="PANTHER" id="PTHR33180">
    <property type="entry name" value="PHOTOSYSTEM II CP43 REACTION CENTER PROTEIN"/>
    <property type="match status" value="1"/>
</dbReference>
<dbReference type="PANTHER" id="PTHR33180:SF38">
    <property type="entry name" value="PHOTOSYSTEM II CP47 REACTION CENTER PROTEIN"/>
    <property type="match status" value="1"/>
</dbReference>
<dbReference type="Pfam" id="PF00421">
    <property type="entry name" value="PSII"/>
    <property type="match status" value="1"/>
</dbReference>
<dbReference type="SUPFAM" id="SSF161077">
    <property type="entry name" value="Photosystem II antenna protein-like"/>
    <property type="match status" value="1"/>
</dbReference>
<geneLocation type="chloroplast"/>
<keyword id="KW-0148">Chlorophyll</keyword>
<keyword id="KW-0150">Chloroplast</keyword>
<keyword id="KW-0157">Chromophore</keyword>
<keyword id="KW-0472">Membrane</keyword>
<keyword id="KW-0602">Photosynthesis</keyword>
<keyword id="KW-0604">Photosystem II</keyword>
<keyword id="KW-0934">Plastid</keyword>
<keyword id="KW-0793">Thylakoid</keyword>
<keyword id="KW-0812">Transmembrane</keyword>
<keyword id="KW-1133">Transmembrane helix</keyword>
<evidence type="ECO:0000255" key="1">
    <source>
        <dbReference type="HAMAP-Rule" id="MF_01495"/>
    </source>
</evidence>
<feature type="chain" id="PRO_0000359832" description="Photosystem II CP47 reaction center protein">
    <location>
        <begin position="1"/>
        <end position="508"/>
    </location>
</feature>
<feature type="transmembrane region" description="Helical" evidence="1">
    <location>
        <begin position="21"/>
        <end position="36"/>
    </location>
</feature>
<feature type="transmembrane region" description="Helical" evidence="1">
    <location>
        <begin position="101"/>
        <end position="115"/>
    </location>
</feature>
<feature type="transmembrane region" description="Helical" evidence="1">
    <location>
        <begin position="140"/>
        <end position="156"/>
    </location>
</feature>
<feature type="transmembrane region" description="Helical" evidence="1">
    <location>
        <begin position="203"/>
        <end position="218"/>
    </location>
</feature>
<feature type="transmembrane region" description="Helical" evidence="1">
    <location>
        <begin position="237"/>
        <end position="252"/>
    </location>
</feature>
<feature type="transmembrane region" description="Helical" evidence="1">
    <location>
        <begin position="457"/>
        <end position="472"/>
    </location>
</feature>
<sequence length="508" mass="56156">MGLPWYRVHTVVLNDPGRLLSVHIMHTALVAGWAGSMALYELAVFDPSDPVLDPMWRQGMFVIPFMTRLGITNSWGGWSITGGTVTNPGIWSYEGVAGSHIVFSGLCFLAAIWHWVYWDLEIFCDERTGKPSLDLPKIFGIHLFLSGVACFGFGVFHVTGLYGPGIWVSDPYGLTGKVQPVNPAWGVEGFDPFVPGGIASHHIAAGTLGILAGLFHLSVRPPQRLYKGLRMGNIETVLSSSIAAVFFAAFVVAGTMWYGSATTPIELFGPTRYQWDQGYFQQEIYRRVSAGLAENKSLSEAWSKIPEKLAFYDYIGNNPAKGGLFRAGSMDNGDGIAVGWLGHPIFRDKEGRELFVRRMPTFFETFPVVLVDGDGIVRADVPFRRAESKYSVEQVGVTLEFYGGELNGVSYSDPAVVKKYARRAQLGEIFELDRATLKSDGVFRSSPRGWFTFGHASFALLFFFGHIWHGARTLFRDVFAGIDPDLDAQVEFGAFQKLGDPTTRREVV</sequence>